<protein>
    <recommendedName>
        <fullName evidence="4">Leucine-rich repeat-containing protein 51</fullName>
    </recommendedName>
</protein>
<gene>
    <name evidence="4" type="primary">Lrrc51</name>
</gene>
<accession>B6CZ61</accession>
<sequence>MSKRDYMNTSVQEPPLDYSFKSVQMIQDLISEEPRTGLRPVKYSKSGKSLTQSLWLNNNVLNDLKDFNQVVSQLLQHPENLAWIDLSFNDLTTIDPVLTTFFNLSVLYLHGNSIHRLGEVNKLAVLPRLRSLTLHGNPIEEEKGYRQYVLCNLPRITTFDFSGVTKADRSTAEVWKRMNIKPKKVRIKQDVL</sequence>
<feature type="chain" id="PRO_0000370744" description="Leucine-rich repeat-containing protein 51">
    <location>
        <begin position="1"/>
        <end position="192"/>
    </location>
</feature>
<feature type="repeat" description="LRR 1">
    <location>
        <begin position="49"/>
        <end position="71"/>
    </location>
</feature>
<feature type="repeat" description="LRR 2">
    <location>
        <begin position="80"/>
        <end position="101"/>
    </location>
</feature>
<feature type="repeat" description="LRR 3">
    <location>
        <begin position="103"/>
        <end position="124"/>
    </location>
</feature>
<feature type="domain" description="LRRCT">
    <location>
        <begin position="137"/>
        <end position="175"/>
    </location>
</feature>
<reference evidence="2" key="1">
    <citation type="journal article" date="2008" name="Nat. Genet.">
        <title>Mutations of LRTOMT, a fusion gene with alternative reading frames, cause nonsyndromic deafness in humans.</title>
        <authorList>
            <person name="Ahmed Z.M."/>
            <person name="Masmoudi S."/>
            <person name="Kalay E."/>
            <person name="Belyantseva I.A."/>
            <person name="Mosrati M.A."/>
            <person name="Collin R.W.J."/>
            <person name="Riazuddin S."/>
            <person name="Hmani-Aifa M."/>
            <person name="Venselaar H."/>
            <person name="Kawar M.N."/>
            <person name="Tlili A."/>
            <person name="van der Zwaag B."/>
            <person name="Khan S.Y."/>
            <person name="Ayadi L."/>
            <person name="Riazuddin S.A."/>
            <person name="Morell R.J."/>
            <person name="Griffith A.J."/>
            <person name="Charfedine I."/>
            <person name="Caylan R."/>
            <person name="Oostrik J."/>
            <person name="Karaguzel A."/>
            <person name="Ghorbel A."/>
            <person name="Riazuddin S."/>
            <person name="Friedman T.B."/>
            <person name="Ayadi H."/>
            <person name="Kremer H."/>
        </authorList>
    </citation>
    <scope>NUCLEOTIDE SEQUENCE [MRNA]</scope>
    <source>
        <strain evidence="2">Sprague-Dawley</strain>
        <tissue evidence="2">Brain</tissue>
    </source>
</reference>
<reference evidence="3" key="2">
    <citation type="submission" date="2005-09" db="EMBL/GenBank/DDBJ databases">
        <authorList>
            <person name="Mural R.J."/>
            <person name="Adams M.D."/>
            <person name="Myers E.W."/>
            <person name="Smith H.O."/>
            <person name="Venter J.C."/>
        </authorList>
    </citation>
    <scope>NUCLEOTIDE SEQUENCE [LARGE SCALE GENOMIC DNA]</scope>
</reference>
<comment type="subcellular location">
    <subcellularLocation>
        <location evidence="1">Cytoplasm</location>
    </subcellularLocation>
</comment>
<name>LRC51_RAT</name>
<keyword id="KW-0963">Cytoplasm</keyword>
<keyword id="KW-0433">Leucine-rich repeat</keyword>
<keyword id="KW-1185">Reference proteome</keyword>
<keyword id="KW-0677">Repeat</keyword>
<dbReference type="EMBL" id="EU627092">
    <property type="protein sequence ID" value="ACF40902.1"/>
    <property type="molecule type" value="mRNA"/>
</dbReference>
<dbReference type="EMBL" id="CH473956">
    <property type="protein sequence ID" value="EDM18240.1"/>
    <property type="molecule type" value="Genomic_DNA"/>
</dbReference>
<dbReference type="RefSeq" id="NP_001099754.1">
    <property type="nucleotide sequence ID" value="NM_001106284.1"/>
</dbReference>
<dbReference type="RefSeq" id="XP_006229932.1">
    <property type="nucleotide sequence ID" value="XM_006229870.5"/>
</dbReference>
<dbReference type="RefSeq" id="XP_006229933.1">
    <property type="nucleotide sequence ID" value="XM_006229871.5"/>
</dbReference>
<dbReference type="RefSeq" id="XP_006229934.1">
    <property type="nucleotide sequence ID" value="XM_006229872.5"/>
</dbReference>
<dbReference type="RefSeq" id="XP_006229935.1">
    <property type="nucleotide sequence ID" value="XM_006229873.5"/>
</dbReference>
<dbReference type="RefSeq" id="XP_006229936.1">
    <property type="nucleotide sequence ID" value="XM_006229874.5"/>
</dbReference>
<dbReference type="RefSeq" id="XP_006229937.1">
    <property type="nucleotide sequence ID" value="XM_006229875.5"/>
</dbReference>
<dbReference type="RefSeq" id="XP_017444456.1">
    <property type="nucleotide sequence ID" value="XM_017588967.1"/>
</dbReference>
<dbReference type="RefSeq" id="XP_063141282.1">
    <property type="nucleotide sequence ID" value="XM_063285212.1"/>
</dbReference>
<dbReference type="RefSeq" id="XP_063141284.1">
    <property type="nucleotide sequence ID" value="XM_063285214.1"/>
</dbReference>
<dbReference type="RefSeq" id="XP_063141288.1">
    <property type="nucleotide sequence ID" value="XM_063285218.1"/>
</dbReference>
<dbReference type="RefSeq" id="XP_063141298.1">
    <property type="nucleotide sequence ID" value="XM_063285228.1"/>
</dbReference>
<dbReference type="RefSeq" id="XP_063141303.1">
    <property type="nucleotide sequence ID" value="XM_063285233.1"/>
</dbReference>
<dbReference type="SMR" id="B6CZ61"/>
<dbReference type="FunCoup" id="B6CZ61">
    <property type="interactions" value="107"/>
</dbReference>
<dbReference type="STRING" id="10116.ENSRNOP00000027261"/>
<dbReference type="PhosphoSitePlus" id="B6CZ61"/>
<dbReference type="PaxDb" id="10116-ENSRNOP00000027261"/>
<dbReference type="Ensembl" id="ENSRNOT00000027261.6">
    <property type="protein sequence ID" value="ENSRNOP00000027261.3"/>
    <property type="gene ID" value="ENSRNOG00000020124.6"/>
</dbReference>
<dbReference type="GeneID" id="293156"/>
<dbReference type="KEGG" id="rno:293156"/>
<dbReference type="UCSC" id="RGD:1565856">
    <property type="organism name" value="rat"/>
</dbReference>
<dbReference type="AGR" id="RGD:1565856"/>
<dbReference type="CTD" id="120356739"/>
<dbReference type="RGD" id="1565856">
    <property type="gene designation" value="Lrrc51"/>
</dbReference>
<dbReference type="eggNOG" id="KOG1644">
    <property type="taxonomic scope" value="Eukaryota"/>
</dbReference>
<dbReference type="GeneTree" id="ENSGT00510000047925"/>
<dbReference type="HOGENOM" id="CLU_095080_1_1_1"/>
<dbReference type="InParanoid" id="B6CZ61"/>
<dbReference type="OMA" id="LWHQSNS"/>
<dbReference type="OrthoDB" id="676979at2759"/>
<dbReference type="PhylomeDB" id="B6CZ61"/>
<dbReference type="TreeFam" id="TF329158"/>
<dbReference type="PRO" id="PR:B6CZ61"/>
<dbReference type="Proteomes" id="UP000002494">
    <property type="component" value="Chromosome 1"/>
</dbReference>
<dbReference type="Proteomes" id="UP000234681">
    <property type="component" value="Chromosome 1"/>
</dbReference>
<dbReference type="Bgee" id="ENSRNOG00000020124">
    <property type="expression patterns" value="Expressed in testis and 19 other cell types or tissues"/>
</dbReference>
<dbReference type="GO" id="GO:0005930">
    <property type="term" value="C:axoneme"/>
    <property type="evidence" value="ECO:0000318"/>
    <property type="project" value="GO_Central"/>
</dbReference>
<dbReference type="Gene3D" id="3.80.10.10">
    <property type="entry name" value="Ribonuclease Inhibitor"/>
    <property type="match status" value="1"/>
</dbReference>
<dbReference type="InterPro" id="IPR001611">
    <property type="entry name" value="Leu-rich_rpt"/>
</dbReference>
<dbReference type="InterPro" id="IPR032675">
    <property type="entry name" value="LRR_dom_sf"/>
</dbReference>
<dbReference type="PANTHER" id="PTHR46545">
    <property type="entry name" value="LEUCINE-RICH REPEAT-CONTAINING PROTEIN 51"/>
    <property type="match status" value="1"/>
</dbReference>
<dbReference type="PANTHER" id="PTHR46545:SF1">
    <property type="entry name" value="LEUCINE-RICH REPEAT-CONTAINING PROTEIN 51"/>
    <property type="match status" value="1"/>
</dbReference>
<dbReference type="Pfam" id="PF14580">
    <property type="entry name" value="LRR_9"/>
    <property type="match status" value="1"/>
</dbReference>
<dbReference type="SUPFAM" id="SSF52075">
    <property type="entry name" value="Outer arm dynein light chain 1"/>
    <property type="match status" value="1"/>
</dbReference>
<dbReference type="PROSITE" id="PS51450">
    <property type="entry name" value="LRR"/>
    <property type="match status" value="4"/>
</dbReference>
<organism>
    <name type="scientific">Rattus norvegicus</name>
    <name type="common">Rat</name>
    <dbReference type="NCBI Taxonomy" id="10116"/>
    <lineage>
        <taxon>Eukaryota</taxon>
        <taxon>Metazoa</taxon>
        <taxon>Chordata</taxon>
        <taxon>Craniata</taxon>
        <taxon>Vertebrata</taxon>
        <taxon>Euteleostomi</taxon>
        <taxon>Mammalia</taxon>
        <taxon>Eutheria</taxon>
        <taxon>Euarchontoglires</taxon>
        <taxon>Glires</taxon>
        <taxon>Rodentia</taxon>
        <taxon>Myomorpha</taxon>
        <taxon>Muroidea</taxon>
        <taxon>Muridae</taxon>
        <taxon>Murinae</taxon>
        <taxon>Rattus</taxon>
    </lineage>
</organism>
<proteinExistence type="evidence at transcript level"/>
<evidence type="ECO:0000250" key="1">
    <source>
        <dbReference type="UniProtKB" id="Q9DAK8"/>
    </source>
</evidence>
<evidence type="ECO:0000312" key="2">
    <source>
        <dbReference type="EMBL" id="ACF40902.1"/>
    </source>
</evidence>
<evidence type="ECO:0000312" key="3">
    <source>
        <dbReference type="EMBL" id="EDM18240.1"/>
    </source>
</evidence>
<evidence type="ECO:0000312" key="4">
    <source>
        <dbReference type="RGD" id="1565856"/>
    </source>
</evidence>